<feature type="signal peptide" evidence="1">
    <location>
        <begin position="1"/>
        <end position="16"/>
    </location>
</feature>
<feature type="chain" id="PRO_1000072285" description="Flagellar P-ring protein">
    <location>
        <begin position="17"/>
        <end position="349"/>
    </location>
</feature>
<keyword id="KW-0975">Bacterial flagellum</keyword>
<keyword id="KW-0574">Periplasm</keyword>
<keyword id="KW-1185">Reference proteome</keyword>
<keyword id="KW-0732">Signal</keyword>
<organism>
    <name type="scientific">Aliarcobacter butzleri (strain RM4018)</name>
    <name type="common">Arcobacter butzleri</name>
    <dbReference type="NCBI Taxonomy" id="367737"/>
    <lineage>
        <taxon>Bacteria</taxon>
        <taxon>Pseudomonadati</taxon>
        <taxon>Campylobacterota</taxon>
        <taxon>Epsilonproteobacteria</taxon>
        <taxon>Campylobacterales</taxon>
        <taxon>Arcobacteraceae</taxon>
        <taxon>Aliarcobacter</taxon>
    </lineage>
</organism>
<dbReference type="EMBL" id="CP000361">
    <property type="protein sequence ID" value="ABV66478.1"/>
    <property type="molecule type" value="Genomic_DNA"/>
</dbReference>
<dbReference type="SMR" id="A8ERA4"/>
<dbReference type="STRING" id="367737.Abu_0201"/>
<dbReference type="KEGG" id="abu:Abu_0201"/>
<dbReference type="eggNOG" id="COG1706">
    <property type="taxonomic scope" value="Bacteria"/>
</dbReference>
<dbReference type="HOGENOM" id="CLU_045235_1_0_7"/>
<dbReference type="Proteomes" id="UP000001136">
    <property type="component" value="Chromosome"/>
</dbReference>
<dbReference type="GO" id="GO:0009428">
    <property type="term" value="C:bacterial-type flagellum basal body, distal rod, P ring"/>
    <property type="evidence" value="ECO:0007669"/>
    <property type="project" value="InterPro"/>
</dbReference>
<dbReference type="GO" id="GO:0030288">
    <property type="term" value="C:outer membrane-bounded periplasmic space"/>
    <property type="evidence" value="ECO:0007669"/>
    <property type="project" value="InterPro"/>
</dbReference>
<dbReference type="GO" id="GO:0005198">
    <property type="term" value="F:structural molecule activity"/>
    <property type="evidence" value="ECO:0007669"/>
    <property type="project" value="InterPro"/>
</dbReference>
<dbReference type="GO" id="GO:0071973">
    <property type="term" value="P:bacterial-type flagellum-dependent cell motility"/>
    <property type="evidence" value="ECO:0007669"/>
    <property type="project" value="InterPro"/>
</dbReference>
<dbReference type="HAMAP" id="MF_00416">
    <property type="entry name" value="FlgI"/>
    <property type="match status" value="1"/>
</dbReference>
<dbReference type="InterPro" id="IPR001782">
    <property type="entry name" value="Flag_FlgI"/>
</dbReference>
<dbReference type="PANTHER" id="PTHR30381">
    <property type="entry name" value="FLAGELLAR P-RING PERIPLASMIC PROTEIN FLGI"/>
    <property type="match status" value="1"/>
</dbReference>
<dbReference type="PANTHER" id="PTHR30381:SF0">
    <property type="entry name" value="FLAGELLAR P-RING PROTEIN"/>
    <property type="match status" value="1"/>
</dbReference>
<dbReference type="Pfam" id="PF02119">
    <property type="entry name" value="FlgI"/>
    <property type="match status" value="1"/>
</dbReference>
<dbReference type="PRINTS" id="PR01010">
    <property type="entry name" value="FLGPRINGFLGI"/>
</dbReference>
<proteinExistence type="inferred from homology"/>
<reference key="1">
    <citation type="journal article" date="2007" name="PLoS ONE">
        <title>The complete genome sequence and analysis of the Epsilonproteobacterium Arcobacter butzleri.</title>
        <authorList>
            <person name="Miller W.G."/>
            <person name="Parker C.T."/>
            <person name="Rubenfield M."/>
            <person name="Mendz G.L."/>
            <person name="Woesten M.M.S.M."/>
            <person name="Ussery D.W."/>
            <person name="Stolz J.F."/>
            <person name="Binnewies T.T."/>
            <person name="Hallin P.F."/>
            <person name="Wang G."/>
            <person name="Malek J.A."/>
            <person name="Rogosin A."/>
            <person name="Stanker L.H."/>
            <person name="Mandrell R.E."/>
        </authorList>
    </citation>
    <scope>NUCLEOTIDE SEQUENCE [LARGE SCALE GENOMIC DNA]</scope>
    <source>
        <strain>RM4018</strain>
    </source>
</reference>
<gene>
    <name evidence="1" type="primary">flgI</name>
    <name type="ordered locus">Abu_0201</name>
</gene>
<accession>A8ERA4</accession>
<protein>
    <recommendedName>
        <fullName evidence="1">Flagellar P-ring protein</fullName>
    </recommendedName>
    <alternativeName>
        <fullName evidence="1">Basal body P-ring protein</fullName>
    </alternativeName>
</protein>
<name>FLGI_ALIB4</name>
<comment type="function">
    <text evidence="1">Assembles around the rod to form the L-ring and probably protects the motor/basal body from shearing forces during rotation.</text>
</comment>
<comment type="subunit">
    <text evidence="1">The basal body constitutes a major portion of the flagellar organelle and consists of four rings (L,P,S, and M) mounted on a central rod.</text>
</comment>
<comment type="subcellular location">
    <subcellularLocation>
        <location evidence="1">Periplasm</location>
    </subcellularLocation>
    <subcellularLocation>
        <location evidence="1">Bacterial flagellum basal body</location>
    </subcellularLocation>
</comment>
<comment type="similarity">
    <text evidence="1">Belongs to the FlgI family.</text>
</comment>
<evidence type="ECO:0000255" key="1">
    <source>
        <dbReference type="HAMAP-Rule" id="MF_00416"/>
    </source>
</evidence>
<sequence length="349" mass="38204">MKYFFIIALLLSSLYSQTIKDISNIIGIRENQLIGYGLIVGLAGTGDKSKFTMQSLQNLLRNSYIKIPAGSINSKNIAAVMVTADLPPFARQGDKIKVNISTIGDAKSVDHGELLITQLKGVDGNVYALAQGTIVANENNKTTGFIYDGATVENEINFDLQSEDSIQLSLLKNSAKNADLIETKINDTFGKKLATALDTRTIDVKKPDGMSIVKFISLVQNIELESSFKKKLIIDMNRESILAGGDIVIDPVTIARDTFTIRINKTGLGEVDWNNPTINTGVDIGDDVRIADKPVIDINNAMINTKNPPTVADLVRSMKVMKLPMKEIIDTLKMIKDMGAIDVDIELRE</sequence>